<comment type="function">
    <text evidence="1">Catalyzes the attachment of tyrosine to tRNA(Tyr) in a two-step reaction: tyrosine is first activated by ATP to form Tyr-AMP and then transferred to the acceptor end of tRNA(Tyr).</text>
</comment>
<comment type="catalytic activity">
    <reaction evidence="1">
        <text>tRNA(Tyr) + L-tyrosine + ATP = L-tyrosyl-tRNA(Tyr) + AMP + diphosphate + H(+)</text>
        <dbReference type="Rhea" id="RHEA:10220"/>
        <dbReference type="Rhea" id="RHEA-COMP:9706"/>
        <dbReference type="Rhea" id="RHEA-COMP:9707"/>
        <dbReference type="ChEBI" id="CHEBI:15378"/>
        <dbReference type="ChEBI" id="CHEBI:30616"/>
        <dbReference type="ChEBI" id="CHEBI:33019"/>
        <dbReference type="ChEBI" id="CHEBI:58315"/>
        <dbReference type="ChEBI" id="CHEBI:78442"/>
        <dbReference type="ChEBI" id="CHEBI:78536"/>
        <dbReference type="ChEBI" id="CHEBI:456215"/>
        <dbReference type="EC" id="6.1.1.1"/>
    </reaction>
</comment>
<comment type="subunit">
    <text evidence="1">Homodimer.</text>
</comment>
<comment type="subcellular location">
    <subcellularLocation>
        <location evidence="1">Cytoplasm</location>
    </subcellularLocation>
</comment>
<comment type="similarity">
    <text evidence="1">Belongs to the class-I aminoacyl-tRNA synthetase family. TyrS type 1 subfamily.</text>
</comment>
<dbReference type="EC" id="6.1.1.1" evidence="1"/>
<dbReference type="EMBL" id="CP000009">
    <property type="protein sequence ID" value="AAW61116.1"/>
    <property type="molecule type" value="Genomic_DNA"/>
</dbReference>
<dbReference type="RefSeq" id="WP_011252906.1">
    <property type="nucleotide sequence ID" value="NC_006677.1"/>
</dbReference>
<dbReference type="SMR" id="Q5FR80"/>
<dbReference type="STRING" id="290633.GOX1364"/>
<dbReference type="KEGG" id="gox:GOX1364"/>
<dbReference type="eggNOG" id="COG0162">
    <property type="taxonomic scope" value="Bacteria"/>
</dbReference>
<dbReference type="HOGENOM" id="CLU_024003_0_3_5"/>
<dbReference type="Proteomes" id="UP000006375">
    <property type="component" value="Chromosome"/>
</dbReference>
<dbReference type="GO" id="GO:0005829">
    <property type="term" value="C:cytosol"/>
    <property type="evidence" value="ECO:0007669"/>
    <property type="project" value="TreeGrafter"/>
</dbReference>
<dbReference type="GO" id="GO:0005524">
    <property type="term" value="F:ATP binding"/>
    <property type="evidence" value="ECO:0007669"/>
    <property type="project" value="UniProtKB-UniRule"/>
</dbReference>
<dbReference type="GO" id="GO:0003723">
    <property type="term" value="F:RNA binding"/>
    <property type="evidence" value="ECO:0007669"/>
    <property type="project" value="UniProtKB-KW"/>
</dbReference>
<dbReference type="GO" id="GO:0004831">
    <property type="term" value="F:tyrosine-tRNA ligase activity"/>
    <property type="evidence" value="ECO:0007669"/>
    <property type="project" value="UniProtKB-UniRule"/>
</dbReference>
<dbReference type="GO" id="GO:0006437">
    <property type="term" value="P:tyrosyl-tRNA aminoacylation"/>
    <property type="evidence" value="ECO:0007669"/>
    <property type="project" value="UniProtKB-UniRule"/>
</dbReference>
<dbReference type="CDD" id="cd00805">
    <property type="entry name" value="TyrRS_core"/>
    <property type="match status" value="1"/>
</dbReference>
<dbReference type="FunFam" id="3.40.50.620:FF:000008">
    <property type="entry name" value="Tyrosine--tRNA ligase"/>
    <property type="match status" value="1"/>
</dbReference>
<dbReference type="Gene3D" id="3.40.50.620">
    <property type="entry name" value="HUPs"/>
    <property type="match status" value="1"/>
</dbReference>
<dbReference type="Gene3D" id="3.10.290.10">
    <property type="entry name" value="RNA-binding S4 domain"/>
    <property type="match status" value="1"/>
</dbReference>
<dbReference type="Gene3D" id="1.10.240.10">
    <property type="entry name" value="Tyrosyl-Transfer RNA Synthetase"/>
    <property type="match status" value="1"/>
</dbReference>
<dbReference type="HAMAP" id="MF_02006">
    <property type="entry name" value="Tyr_tRNA_synth_type1"/>
    <property type="match status" value="1"/>
</dbReference>
<dbReference type="InterPro" id="IPR001412">
    <property type="entry name" value="aa-tRNA-synth_I_CS"/>
</dbReference>
<dbReference type="InterPro" id="IPR002305">
    <property type="entry name" value="aa-tRNA-synth_Ic"/>
</dbReference>
<dbReference type="InterPro" id="IPR014729">
    <property type="entry name" value="Rossmann-like_a/b/a_fold"/>
</dbReference>
<dbReference type="InterPro" id="IPR036986">
    <property type="entry name" value="S4_RNA-bd_sf"/>
</dbReference>
<dbReference type="InterPro" id="IPR002307">
    <property type="entry name" value="Tyr-tRNA-ligase"/>
</dbReference>
<dbReference type="InterPro" id="IPR024088">
    <property type="entry name" value="Tyr-tRNA-ligase_bac-type"/>
</dbReference>
<dbReference type="InterPro" id="IPR024107">
    <property type="entry name" value="Tyr-tRNA-ligase_bac_1"/>
</dbReference>
<dbReference type="NCBIfam" id="TIGR00234">
    <property type="entry name" value="tyrS"/>
    <property type="match status" value="1"/>
</dbReference>
<dbReference type="PANTHER" id="PTHR11766:SF0">
    <property type="entry name" value="TYROSINE--TRNA LIGASE, MITOCHONDRIAL"/>
    <property type="match status" value="1"/>
</dbReference>
<dbReference type="PANTHER" id="PTHR11766">
    <property type="entry name" value="TYROSYL-TRNA SYNTHETASE"/>
    <property type="match status" value="1"/>
</dbReference>
<dbReference type="Pfam" id="PF00579">
    <property type="entry name" value="tRNA-synt_1b"/>
    <property type="match status" value="1"/>
</dbReference>
<dbReference type="PRINTS" id="PR01040">
    <property type="entry name" value="TRNASYNTHTYR"/>
</dbReference>
<dbReference type="SUPFAM" id="SSF55174">
    <property type="entry name" value="Alpha-L RNA-binding motif"/>
    <property type="match status" value="1"/>
</dbReference>
<dbReference type="SUPFAM" id="SSF52374">
    <property type="entry name" value="Nucleotidylyl transferase"/>
    <property type="match status" value="1"/>
</dbReference>
<dbReference type="PROSITE" id="PS00178">
    <property type="entry name" value="AA_TRNA_LIGASE_I"/>
    <property type="match status" value="1"/>
</dbReference>
<dbReference type="PROSITE" id="PS50889">
    <property type="entry name" value="S4"/>
    <property type="match status" value="1"/>
</dbReference>
<gene>
    <name evidence="1" type="primary">tyrS</name>
    <name type="ordered locus">GOX1364</name>
</gene>
<protein>
    <recommendedName>
        <fullName evidence="1">Tyrosine--tRNA ligase</fullName>
        <ecNumber evidence="1">6.1.1.1</ecNumber>
    </recommendedName>
    <alternativeName>
        <fullName evidence="1">Tyrosyl-tRNA synthetase</fullName>
        <shortName evidence="1">TyrRS</shortName>
    </alternativeName>
</protein>
<sequence length="416" mass="45565">MPKSPFLLEAQARGLIFQCTDLDALDEAMLAGPITAYVGFDPTADSLHVGNALTIMALRLLQKHGHRPIALMGGGTAKIGDPSFRDEARSLITNETIAHNIAGIEKSLRQFITFSDEDPSSGAILANNADWLDKLSYINLLQDVGVHFSVSRMLGFDSVRQRLEREQGLTFLEFNYSILQSYDFRELNRRHGAVLQMGGSDQWGNIVSGIDLTRRTDGKQIFGLTTPLVTTSSGAKMGKSAKGATWVRPEKLPVFEYWQFWRNTEDADVGRFLKFFTDLPVEECERLGALEGSEINEAKKILATEATAICHGRGAAEEAAETARRVFEQGSAQAALPEIDLPANLIAEGLPAFRVFQEAGLAASGGEARRLIRGGGGRVNDVVVSDENQTFTLDDLRDGVLKVSYGKKKHILLRPV</sequence>
<reference key="1">
    <citation type="journal article" date="2005" name="Nat. Biotechnol.">
        <title>Complete genome sequence of the acetic acid bacterium Gluconobacter oxydans.</title>
        <authorList>
            <person name="Prust C."/>
            <person name="Hoffmeister M."/>
            <person name="Liesegang H."/>
            <person name="Wiezer A."/>
            <person name="Fricke W.F."/>
            <person name="Ehrenreich A."/>
            <person name="Gottschalk G."/>
            <person name="Deppenmeier U."/>
        </authorList>
    </citation>
    <scope>NUCLEOTIDE SEQUENCE [LARGE SCALE GENOMIC DNA]</scope>
    <source>
        <strain>621H</strain>
    </source>
</reference>
<evidence type="ECO:0000255" key="1">
    <source>
        <dbReference type="HAMAP-Rule" id="MF_02006"/>
    </source>
</evidence>
<proteinExistence type="inferred from homology"/>
<keyword id="KW-0030">Aminoacyl-tRNA synthetase</keyword>
<keyword id="KW-0067">ATP-binding</keyword>
<keyword id="KW-0963">Cytoplasm</keyword>
<keyword id="KW-0436">Ligase</keyword>
<keyword id="KW-0547">Nucleotide-binding</keyword>
<keyword id="KW-0648">Protein biosynthesis</keyword>
<keyword id="KW-1185">Reference proteome</keyword>
<keyword id="KW-0694">RNA-binding</keyword>
<organism>
    <name type="scientific">Gluconobacter oxydans (strain 621H)</name>
    <name type="common">Gluconobacter suboxydans</name>
    <dbReference type="NCBI Taxonomy" id="290633"/>
    <lineage>
        <taxon>Bacteria</taxon>
        <taxon>Pseudomonadati</taxon>
        <taxon>Pseudomonadota</taxon>
        <taxon>Alphaproteobacteria</taxon>
        <taxon>Acetobacterales</taxon>
        <taxon>Acetobacteraceae</taxon>
        <taxon>Gluconobacter</taxon>
    </lineage>
</organism>
<accession>Q5FR80</accession>
<name>SYY_GLUOX</name>
<feature type="chain" id="PRO_0000234714" description="Tyrosine--tRNA ligase">
    <location>
        <begin position="1"/>
        <end position="416"/>
    </location>
</feature>
<feature type="domain" description="S4 RNA-binding" evidence="1">
    <location>
        <begin position="350"/>
        <end position="416"/>
    </location>
</feature>
<feature type="short sequence motif" description="'HIGH' region">
    <location>
        <begin position="42"/>
        <end position="51"/>
    </location>
</feature>
<feature type="short sequence motif" description="'KMSKS' region">
    <location>
        <begin position="236"/>
        <end position="240"/>
    </location>
</feature>
<feature type="binding site" evidence="1">
    <location>
        <position position="37"/>
    </location>
    <ligand>
        <name>L-tyrosine</name>
        <dbReference type="ChEBI" id="CHEBI:58315"/>
    </ligand>
</feature>
<feature type="binding site" evidence="1">
    <location>
        <position position="176"/>
    </location>
    <ligand>
        <name>L-tyrosine</name>
        <dbReference type="ChEBI" id="CHEBI:58315"/>
    </ligand>
</feature>
<feature type="binding site" evidence="1">
    <location>
        <position position="180"/>
    </location>
    <ligand>
        <name>L-tyrosine</name>
        <dbReference type="ChEBI" id="CHEBI:58315"/>
    </ligand>
</feature>
<feature type="binding site" evidence="1">
    <location>
        <position position="239"/>
    </location>
    <ligand>
        <name>ATP</name>
        <dbReference type="ChEBI" id="CHEBI:30616"/>
    </ligand>
</feature>